<evidence type="ECO:0000255" key="1">
    <source>
        <dbReference type="HAMAP-Rule" id="MF_00152"/>
    </source>
</evidence>
<comment type="function">
    <text evidence="1">Endonuclease IV plays a role in DNA repair. It cleaves phosphodiester bonds at apurinic or apyrimidinic (AP) sites, generating a 3'-hydroxyl group and a 5'-terminal sugar phosphate.</text>
</comment>
<comment type="catalytic activity">
    <reaction evidence="1">
        <text>Endonucleolytic cleavage to 5'-phosphooligonucleotide end-products.</text>
        <dbReference type="EC" id="3.1.21.2"/>
    </reaction>
</comment>
<comment type="cofactor">
    <cofactor evidence="1">
        <name>Zn(2+)</name>
        <dbReference type="ChEBI" id="CHEBI:29105"/>
    </cofactor>
    <text evidence="1">Binds 3 Zn(2+) ions.</text>
</comment>
<comment type="similarity">
    <text evidence="1">Belongs to the AP endonuclease 2 family.</text>
</comment>
<keyword id="KW-0227">DNA damage</keyword>
<keyword id="KW-0234">DNA repair</keyword>
<keyword id="KW-0255">Endonuclease</keyword>
<keyword id="KW-0378">Hydrolase</keyword>
<keyword id="KW-0479">Metal-binding</keyword>
<keyword id="KW-0540">Nuclease</keyword>
<keyword id="KW-1185">Reference proteome</keyword>
<keyword id="KW-0862">Zinc</keyword>
<accession>Q8FFU0</accession>
<dbReference type="EC" id="3.1.21.2" evidence="1"/>
<dbReference type="EMBL" id="AE014075">
    <property type="protein sequence ID" value="AAN81150.1"/>
    <property type="molecule type" value="Genomic_DNA"/>
</dbReference>
<dbReference type="RefSeq" id="WP_000873880.1">
    <property type="nucleotide sequence ID" value="NZ_CP051263.1"/>
</dbReference>
<dbReference type="SMR" id="Q8FFU0"/>
<dbReference type="STRING" id="199310.c2694"/>
<dbReference type="GeneID" id="86947100"/>
<dbReference type="KEGG" id="ecc:c2694"/>
<dbReference type="eggNOG" id="COG0648">
    <property type="taxonomic scope" value="Bacteria"/>
</dbReference>
<dbReference type="HOGENOM" id="CLU_025885_0_4_6"/>
<dbReference type="BioCyc" id="ECOL199310:C2694-MONOMER"/>
<dbReference type="Proteomes" id="UP000001410">
    <property type="component" value="Chromosome"/>
</dbReference>
<dbReference type="GO" id="GO:0008833">
    <property type="term" value="F:deoxyribonuclease IV (phage-T4-induced) activity"/>
    <property type="evidence" value="ECO:0007669"/>
    <property type="project" value="UniProtKB-UniRule"/>
</dbReference>
<dbReference type="GO" id="GO:0003677">
    <property type="term" value="F:DNA binding"/>
    <property type="evidence" value="ECO:0007669"/>
    <property type="project" value="InterPro"/>
</dbReference>
<dbReference type="GO" id="GO:0003906">
    <property type="term" value="F:DNA-(apurinic or apyrimidinic site) endonuclease activity"/>
    <property type="evidence" value="ECO:0007669"/>
    <property type="project" value="TreeGrafter"/>
</dbReference>
<dbReference type="GO" id="GO:0008081">
    <property type="term" value="F:phosphoric diester hydrolase activity"/>
    <property type="evidence" value="ECO:0007669"/>
    <property type="project" value="TreeGrafter"/>
</dbReference>
<dbReference type="GO" id="GO:0008270">
    <property type="term" value="F:zinc ion binding"/>
    <property type="evidence" value="ECO:0007669"/>
    <property type="project" value="UniProtKB-UniRule"/>
</dbReference>
<dbReference type="GO" id="GO:0006284">
    <property type="term" value="P:base-excision repair"/>
    <property type="evidence" value="ECO:0007669"/>
    <property type="project" value="TreeGrafter"/>
</dbReference>
<dbReference type="CDD" id="cd00019">
    <property type="entry name" value="AP2Ec"/>
    <property type="match status" value="1"/>
</dbReference>
<dbReference type="FunFam" id="3.20.20.150:FF:000001">
    <property type="entry name" value="Probable endonuclease 4"/>
    <property type="match status" value="1"/>
</dbReference>
<dbReference type="Gene3D" id="3.20.20.150">
    <property type="entry name" value="Divalent-metal-dependent TIM barrel enzymes"/>
    <property type="match status" value="1"/>
</dbReference>
<dbReference type="HAMAP" id="MF_00152">
    <property type="entry name" value="Nfo"/>
    <property type="match status" value="1"/>
</dbReference>
<dbReference type="InterPro" id="IPR001719">
    <property type="entry name" value="AP_endonuc_2"/>
</dbReference>
<dbReference type="InterPro" id="IPR018246">
    <property type="entry name" value="AP_endonuc_F2_Zn_BS"/>
</dbReference>
<dbReference type="InterPro" id="IPR036237">
    <property type="entry name" value="Xyl_isomerase-like_sf"/>
</dbReference>
<dbReference type="InterPro" id="IPR013022">
    <property type="entry name" value="Xyl_isomerase-like_TIM-brl"/>
</dbReference>
<dbReference type="NCBIfam" id="TIGR00587">
    <property type="entry name" value="nfo"/>
    <property type="match status" value="1"/>
</dbReference>
<dbReference type="NCBIfam" id="NF002199">
    <property type="entry name" value="PRK01060.1-4"/>
    <property type="match status" value="1"/>
</dbReference>
<dbReference type="PANTHER" id="PTHR21445:SF0">
    <property type="entry name" value="APURINIC-APYRIMIDINIC ENDONUCLEASE"/>
    <property type="match status" value="1"/>
</dbReference>
<dbReference type="PANTHER" id="PTHR21445">
    <property type="entry name" value="ENDONUCLEASE IV ENDODEOXYRIBONUCLEASE IV"/>
    <property type="match status" value="1"/>
</dbReference>
<dbReference type="Pfam" id="PF01261">
    <property type="entry name" value="AP_endonuc_2"/>
    <property type="match status" value="1"/>
</dbReference>
<dbReference type="SMART" id="SM00518">
    <property type="entry name" value="AP2Ec"/>
    <property type="match status" value="1"/>
</dbReference>
<dbReference type="SUPFAM" id="SSF51658">
    <property type="entry name" value="Xylose isomerase-like"/>
    <property type="match status" value="1"/>
</dbReference>
<dbReference type="PROSITE" id="PS00729">
    <property type="entry name" value="AP_NUCLEASE_F2_1"/>
    <property type="match status" value="1"/>
</dbReference>
<dbReference type="PROSITE" id="PS00730">
    <property type="entry name" value="AP_NUCLEASE_F2_2"/>
    <property type="match status" value="1"/>
</dbReference>
<dbReference type="PROSITE" id="PS00731">
    <property type="entry name" value="AP_NUCLEASE_F2_3"/>
    <property type="match status" value="1"/>
</dbReference>
<dbReference type="PROSITE" id="PS51432">
    <property type="entry name" value="AP_NUCLEASE_F2_4"/>
    <property type="match status" value="1"/>
</dbReference>
<feature type="chain" id="PRO_0000190840" description="Probable endonuclease 4">
    <location>
        <begin position="1"/>
        <end position="285"/>
    </location>
</feature>
<feature type="binding site" evidence="1">
    <location>
        <position position="69"/>
    </location>
    <ligand>
        <name>Zn(2+)</name>
        <dbReference type="ChEBI" id="CHEBI:29105"/>
        <label>1</label>
    </ligand>
</feature>
<feature type="binding site" evidence="1">
    <location>
        <position position="109"/>
    </location>
    <ligand>
        <name>Zn(2+)</name>
        <dbReference type="ChEBI" id="CHEBI:29105"/>
        <label>1</label>
    </ligand>
</feature>
<feature type="binding site" evidence="1">
    <location>
        <position position="145"/>
    </location>
    <ligand>
        <name>Zn(2+)</name>
        <dbReference type="ChEBI" id="CHEBI:29105"/>
        <label>1</label>
    </ligand>
</feature>
<feature type="binding site" evidence="1">
    <location>
        <position position="145"/>
    </location>
    <ligand>
        <name>Zn(2+)</name>
        <dbReference type="ChEBI" id="CHEBI:29105"/>
        <label>2</label>
    </ligand>
</feature>
<feature type="binding site" evidence="1">
    <location>
        <position position="179"/>
    </location>
    <ligand>
        <name>Zn(2+)</name>
        <dbReference type="ChEBI" id="CHEBI:29105"/>
        <label>2</label>
    </ligand>
</feature>
<feature type="binding site" evidence="1">
    <location>
        <position position="182"/>
    </location>
    <ligand>
        <name>Zn(2+)</name>
        <dbReference type="ChEBI" id="CHEBI:29105"/>
        <label>3</label>
    </ligand>
</feature>
<feature type="binding site" evidence="1">
    <location>
        <position position="216"/>
    </location>
    <ligand>
        <name>Zn(2+)</name>
        <dbReference type="ChEBI" id="CHEBI:29105"/>
        <label>2</label>
    </ligand>
</feature>
<feature type="binding site" evidence="1">
    <location>
        <position position="229"/>
    </location>
    <ligand>
        <name>Zn(2+)</name>
        <dbReference type="ChEBI" id="CHEBI:29105"/>
        <label>3</label>
    </ligand>
</feature>
<feature type="binding site" evidence="1">
    <location>
        <position position="231"/>
    </location>
    <ligand>
        <name>Zn(2+)</name>
        <dbReference type="ChEBI" id="CHEBI:29105"/>
        <label>3</label>
    </ligand>
</feature>
<feature type="binding site" evidence="1">
    <location>
        <position position="261"/>
    </location>
    <ligand>
        <name>Zn(2+)</name>
        <dbReference type="ChEBI" id="CHEBI:29105"/>
        <label>2</label>
    </ligand>
</feature>
<reference key="1">
    <citation type="journal article" date="2002" name="Proc. Natl. Acad. Sci. U.S.A.">
        <title>Extensive mosaic structure revealed by the complete genome sequence of uropathogenic Escherichia coli.</title>
        <authorList>
            <person name="Welch R.A."/>
            <person name="Burland V."/>
            <person name="Plunkett G. III"/>
            <person name="Redford P."/>
            <person name="Roesch P."/>
            <person name="Rasko D."/>
            <person name="Buckles E.L."/>
            <person name="Liou S.-R."/>
            <person name="Boutin A."/>
            <person name="Hackett J."/>
            <person name="Stroud D."/>
            <person name="Mayhew G.F."/>
            <person name="Rose D.J."/>
            <person name="Zhou S."/>
            <person name="Schwartz D.C."/>
            <person name="Perna N.T."/>
            <person name="Mobley H.L.T."/>
            <person name="Donnenberg M.S."/>
            <person name="Blattner F.R."/>
        </authorList>
    </citation>
    <scope>NUCLEOTIDE SEQUENCE [LARGE SCALE GENOMIC DNA]</scope>
    <source>
        <strain>CFT073 / ATCC 700928 / UPEC</strain>
    </source>
</reference>
<protein>
    <recommendedName>
        <fullName evidence="1">Probable endonuclease 4</fullName>
        <ecNumber evidence="1">3.1.21.2</ecNumber>
    </recommendedName>
    <alternativeName>
        <fullName evidence="1">Endodeoxyribonuclease IV</fullName>
    </alternativeName>
    <alternativeName>
        <fullName evidence="1">Endonuclease IV</fullName>
    </alternativeName>
</protein>
<gene>
    <name evidence="1" type="primary">nfo</name>
    <name type="ordered locus">c2694</name>
</gene>
<organism>
    <name type="scientific">Escherichia coli O6:H1 (strain CFT073 / ATCC 700928 / UPEC)</name>
    <dbReference type="NCBI Taxonomy" id="199310"/>
    <lineage>
        <taxon>Bacteria</taxon>
        <taxon>Pseudomonadati</taxon>
        <taxon>Pseudomonadota</taxon>
        <taxon>Gammaproteobacteria</taxon>
        <taxon>Enterobacterales</taxon>
        <taxon>Enterobacteriaceae</taxon>
        <taxon>Escherichia</taxon>
    </lineage>
</organism>
<name>END4_ECOL6</name>
<proteinExistence type="inferred from homology"/>
<sequence length="285" mass="31462">MKYIGAHVSAAGGLANAAIRAAEIDATAFALFTKNQRQWRAAPLTTQTIDEFKAACEKYHYTSAQILPHDSYLINLGHPVAEALEKSRDAFIDEMQRCEQLGLSLLNFHPGSHLMQISEEDCLARIAESINIALDKTQGVTAVIENTAGQGSNLGFKFEHLAAIIDGVEDKSRVGVCIDTCHAFAAGYDLRTPAECEKTFADFARIVGFKYLRGMHLNDAKSTFGSRVDRHHSLGEGNIGHDAFRWIMQDDRFDGIPLILETINPDIWAEEIAWLKAQQTEKAVA</sequence>